<accession>Q5NHR3</accession>
<name>PSD_FRATT</name>
<evidence type="ECO:0000255" key="1">
    <source>
        <dbReference type="HAMAP-Rule" id="MF_00662"/>
    </source>
</evidence>
<sequence length="283" mass="32127">MRDNLFIYLQYLLPHTLTSRLVSKLADSENKIIKNHLIKLAIKKFNINLVEAKETDISKYKSFNDFFIRELKDDLRPISNDKNVISSPADGVLSQFGTITDNSLIQAKGKLFSLESLIASSSTTSFTKFATIYLSPKDYHRVHMPIDGKLTKMVYIPGKLFSVNKITTSKVDNLFAKNERLICYFDTIIGEIAVIFVGALLVAGIETVWHGKIAPNYYKDIQTWDYNSAKFNIKFNKGDILGWFNFGSTVIILTSGNNVSFKFEENKNNIKIQVNQDLALITE</sequence>
<proteinExistence type="inferred from homology"/>
<keyword id="KW-1003">Cell membrane</keyword>
<keyword id="KW-0210">Decarboxylase</keyword>
<keyword id="KW-0444">Lipid biosynthesis</keyword>
<keyword id="KW-0443">Lipid metabolism</keyword>
<keyword id="KW-0456">Lyase</keyword>
<keyword id="KW-0472">Membrane</keyword>
<keyword id="KW-0594">Phospholipid biosynthesis</keyword>
<keyword id="KW-1208">Phospholipid metabolism</keyword>
<keyword id="KW-0670">Pyruvate</keyword>
<keyword id="KW-1185">Reference proteome</keyword>
<keyword id="KW-0865">Zymogen</keyword>
<reference key="1">
    <citation type="journal article" date="2005" name="Nat. Genet.">
        <title>The complete genome sequence of Francisella tularensis, the causative agent of tularemia.</title>
        <authorList>
            <person name="Larsson P."/>
            <person name="Oyston P.C.F."/>
            <person name="Chain P."/>
            <person name="Chu M.C."/>
            <person name="Duffield M."/>
            <person name="Fuxelius H.-H."/>
            <person name="Garcia E."/>
            <person name="Haelltorp G."/>
            <person name="Johansson D."/>
            <person name="Isherwood K.E."/>
            <person name="Karp P.D."/>
            <person name="Larsson E."/>
            <person name="Liu Y."/>
            <person name="Michell S."/>
            <person name="Prior J."/>
            <person name="Prior R."/>
            <person name="Malfatti S."/>
            <person name="Sjoestedt A."/>
            <person name="Svensson K."/>
            <person name="Thompson N."/>
            <person name="Vergez L."/>
            <person name="Wagg J.K."/>
            <person name="Wren B.W."/>
            <person name="Lindler L.E."/>
            <person name="Andersson S.G.E."/>
            <person name="Forsman M."/>
            <person name="Titball R.W."/>
        </authorList>
    </citation>
    <scope>NUCLEOTIDE SEQUENCE [LARGE SCALE GENOMIC DNA]</scope>
    <source>
        <strain>SCHU S4 / Schu 4</strain>
    </source>
</reference>
<reference key="2">
    <citation type="submission" date="2009-05" db="EMBL/GenBank/DDBJ databases">
        <authorList>
            <person name="Duffield M."/>
        </authorList>
    </citation>
    <scope>SEQUENCE REVISION TO 59</scope>
</reference>
<gene>
    <name evidence="1" type="primary">psd</name>
    <name type="ordered locus">FTT_0384c</name>
</gene>
<dbReference type="EC" id="4.1.1.65" evidence="1"/>
<dbReference type="EMBL" id="AJ749949">
    <property type="protein sequence ID" value="CAG45017.2"/>
    <property type="molecule type" value="Genomic_DNA"/>
</dbReference>
<dbReference type="RefSeq" id="YP_169429.2">
    <property type="nucleotide sequence ID" value="NC_006570.2"/>
</dbReference>
<dbReference type="SMR" id="Q5NHR3"/>
<dbReference type="STRING" id="177416.FTT_0384c"/>
<dbReference type="DNASU" id="3191677"/>
<dbReference type="EnsemblBacteria" id="CAG45017">
    <property type="protein sequence ID" value="CAG45017"/>
    <property type="gene ID" value="FTT_0384c"/>
</dbReference>
<dbReference type="KEGG" id="ftu:FTT_0384c"/>
<dbReference type="eggNOG" id="COG0688">
    <property type="taxonomic scope" value="Bacteria"/>
</dbReference>
<dbReference type="OrthoDB" id="9802030at2"/>
<dbReference type="UniPathway" id="UPA00558">
    <property type="reaction ID" value="UER00616"/>
</dbReference>
<dbReference type="Proteomes" id="UP000001174">
    <property type="component" value="Chromosome"/>
</dbReference>
<dbReference type="GO" id="GO:0005886">
    <property type="term" value="C:plasma membrane"/>
    <property type="evidence" value="ECO:0007669"/>
    <property type="project" value="UniProtKB-SubCell"/>
</dbReference>
<dbReference type="GO" id="GO:0004609">
    <property type="term" value="F:phosphatidylserine decarboxylase activity"/>
    <property type="evidence" value="ECO:0007669"/>
    <property type="project" value="UniProtKB-UniRule"/>
</dbReference>
<dbReference type="GO" id="GO:0006646">
    <property type="term" value="P:phosphatidylethanolamine biosynthetic process"/>
    <property type="evidence" value="ECO:0007669"/>
    <property type="project" value="UniProtKB-UniRule"/>
</dbReference>
<dbReference type="HAMAP" id="MF_00662">
    <property type="entry name" value="PS_decarb_PSD_B_type1"/>
    <property type="match status" value="1"/>
</dbReference>
<dbReference type="InterPro" id="IPR003817">
    <property type="entry name" value="PS_Dcarbxylase"/>
</dbReference>
<dbReference type="InterPro" id="IPR033177">
    <property type="entry name" value="PSD-B"/>
</dbReference>
<dbReference type="InterPro" id="IPR033178">
    <property type="entry name" value="PSD_type1_pro"/>
</dbReference>
<dbReference type="NCBIfam" id="TIGR00163">
    <property type="entry name" value="PS_decarb"/>
    <property type="match status" value="1"/>
</dbReference>
<dbReference type="PANTHER" id="PTHR10067">
    <property type="entry name" value="PHOSPHATIDYLSERINE DECARBOXYLASE"/>
    <property type="match status" value="1"/>
</dbReference>
<dbReference type="PANTHER" id="PTHR10067:SF6">
    <property type="entry name" value="PHOSPHATIDYLSERINE DECARBOXYLASE PROENZYME, MITOCHONDRIAL"/>
    <property type="match status" value="1"/>
</dbReference>
<dbReference type="Pfam" id="PF02666">
    <property type="entry name" value="PS_Dcarbxylase"/>
    <property type="match status" value="1"/>
</dbReference>
<feature type="chain" id="PRO_0000029657" description="Phosphatidylserine decarboxylase beta chain" evidence="1">
    <location>
        <begin position="1"/>
        <end position="247"/>
    </location>
</feature>
<feature type="chain" id="PRO_0000029658" description="Phosphatidylserine decarboxylase alpha chain" evidence="1">
    <location>
        <begin position="248"/>
        <end position="283"/>
    </location>
</feature>
<feature type="active site" description="Charge relay system; for autoendoproteolytic cleavage activity" evidence="1">
    <location>
        <position position="90"/>
    </location>
</feature>
<feature type="active site" description="Charge relay system; for autoendoproteolytic cleavage activity" evidence="1">
    <location>
        <position position="143"/>
    </location>
</feature>
<feature type="active site" description="Charge relay system; for autoendoproteolytic cleavage activity" evidence="1">
    <location>
        <position position="248"/>
    </location>
</feature>
<feature type="active site" description="Schiff-base intermediate with substrate; via pyruvic acid; for decarboxylase activity" evidence="1">
    <location>
        <position position="248"/>
    </location>
</feature>
<feature type="site" description="Cleavage (non-hydrolytic); by autocatalysis" evidence="1">
    <location>
        <begin position="247"/>
        <end position="248"/>
    </location>
</feature>
<feature type="modified residue" description="Pyruvic acid (Ser); by autocatalysis" evidence="1">
    <location>
        <position position="248"/>
    </location>
</feature>
<comment type="function">
    <text evidence="1">Catalyzes the formation of phosphatidylethanolamine (PtdEtn) from phosphatidylserine (PtdSer).</text>
</comment>
<comment type="catalytic activity">
    <reaction evidence="1">
        <text>a 1,2-diacyl-sn-glycero-3-phospho-L-serine + H(+) = a 1,2-diacyl-sn-glycero-3-phosphoethanolamine + CO2</text>
        <dbReference type="Rhea" id="RHEA:20828"/>
        <dbReference type="ChEBI" id="CHEBI:15378"/>
        <dbReference type="ChEBI" id="CHEBI:16526"/>
        <dbReference type="ChEBI" id="CHEBI:57262"/>
        <dbReference type="ChEBI" id="CHEBI:64612"/>
        <dbReference type="EC" id="4.1.1.65"/>
    </reaction>
</comment>
<comment type="cofactor">
    <cofactor evidence="1">
        <name>pyruvate</name>
        <dbReference type="ChEBI" id="CHEBI:15361"/>
    </cofactor>
    <text evidence="1">Binds 1 pyruvoyl group covalently per subunit.</text>
</comment>
<comment type="pathway">
    <text evidence="1">Phospholipid metabolism; phosphatidylethanolamine biosynthesis; phosphatidylethanolamine from CDP-diacylglycerol: step 2/2.</text>
</comment>
<comment type="subunit">
    <text evidence="1">Heterodimer of a large membrane-associated beta subunit and a small pyruvoyl-containing alpha subunit.</text>
</comment>
<comment type="subcellular location">
    <subcellularLocation>
        <location evidence="1">Cell membrane</location>
        <topology evidence="1">Peripheral membrane protein</topology>
    </subcellularLocation>
</comment>
<comment type="PTM">
    <text evidence="1">Is synthesized initially as an inactive proenzyme. Formation of the active enzyme involves a self-maturation process in which the active site pyruvoyl group is generated from an internal serine residue via an autocatalytic post-translational modification. Two non-identical subunits are generated from the proenzyme in this reaction, and the pyruvate is formed at the N-terminus of the alpha chain, which is derived from the carboxyl end of the proenzyme. The autoendoproteolytic cleavage occurs by a canonical serine protease mechanism, in which the side chain hydroxyl group of the serine supplies its oxygen atom to form the C-terminus of the beta chain, while the remainder of the serine residue undergoes an oxidative deamination to produce ammonia and the pyruvoyl prosthetic group on the alpha chain. During this reaction, the Ser that is part of the protease active site of the proenzyme becomes the pyruvoyl prosthetic group, which constitutes an essential element of the active site of the mature decarboxylase.</text>
</comment>
<comment type="similarity">
    <text evidence="1">Belongs to the phosphatidylserine decarboxylase family. PSD-B subfamily. Prokaryotic type I sub-subfamily.</text>
</comment>
<organism>
    <name type="scientific">Francisella tularensis subsp. tularensis (strain SCHU S4 / Schu 4)</name>
    <dbReference type="NCBI Taxonomy" id="177416"/>
    <lineage>
        <taxon>Bacteria</taxon>
        <taxon>Pseudomonadati</taxon>
        <taxon>Pseudomonadota</taxon>
        <taxon>Gammaproteobacteria</taxon>
        <taxon>Thiotrichales</taxon>
        <taxon>Francisellaceae</taxon>
        <taxon>Francisella</taxon>
    </lineage>
</organism>
<protein>
    <recommendedName>
        <fullName evidence="1">Phosphatidylserine decarboxylase proenzyme</fullName>
        <ecNumber evidence="1">4.1.1.65</ecNumber>
    </recommendedName>
    <component>
        <recommendedName>
            <fullName evidence="1">Phosphatidylserine decarboxylase alpha chain</fullName>
        </recommendedName>
    </component>
    <component>
        <recommendedName>
            <fullName evidence="1">Phosphatidylserine decarboxylase beta chain</fullName>
        </recommendedName>
    </component>
</protein>